<protein>
    <recommendedName>
        <fullName>Transcriptional activator protein</fullName>
        <shortName>TrAP</shortName>
    </recommendedName>
    <alternativeName>
        <fullName>Protein AC2</fullName>
    </alternativeName>
    <alternativeName>
        <fullName>Protein AL2</fullName>
    </alternativeName>
</protein>
<gene>
    <name type="ORF">AC2</name>
    <name type="ORF">AL2</name>
</gene>
<proteinExistence type="inferred from homology"/>
<organismHost>
    <name type="scientific">Cucurbita moschata</name>
    <name type="common">Winter crookneck squash</name>
    <name type="synonym">Cucurbita pepo var. moschata</name>
    <dbReference type="NCBI Taxonomy" id="3662"/>
</organismHost>
<organismHost>
    <name type="scientific">Cucurbita pepo</name>
    <name type="common">Vegetable marrow</name>
    <name type="synonym">Summer squash</name>
    <dbReference type="NCBI Taxonomy" id="3663"/>
</organismHost>
<organismHost>
    <name type="scientific">Phaseolus vulgaris</name>
    <name type="common">Kidney bean</name>
    <name type="synonym">French bean</name>
    <dbReference type="NCBI Taxonomy" id="3885"/>
</organismHost>
<comment type="function">
    <text evidence="1">Strong activator of the late viral genes promoters. Enhances the expression of the capsid protein and nuclear shuttle protein. Acts as a suppressor of RNA-mediated gene silencing, also known as post-transcriptional gene silencing (PTGS), a mechanism of plant viral defense that limits the accumulation of viral RNAs. Suppresses the host RNA silencing by inhibiting adenosine kinase 2 (ADK2), a kinase involved in a general methylation pathway. Also suppresses the host basal defense by interacting with and inhibiting SNF1 kinase, a key regulator of cell metabolism implicated in innate antiviral defense. Determines pathogenicity (By similarity).</text>
</comment>
<comment type="subunit">
    <text evidence="1">Monomer. Homodimer. Homooligomer. Self-interaction correlates with nuclear localization and efficient activation of transcription. Monomers suppress local silencing by interacting with and inactivating host adenosine kinase 2 (ADK2) in the cytoplasm. Interacts with and inhibits host SNF1 kinase. Binds to ssDNA (By similarity).</text>
</comment>
<comment type="subcellular location">
    <subcellularLocation>
        <location evidence="1">Host nucleus</location>
    </subcellularLocation>
    <subcellularLocation>
        <location evidence="1">Host cytoplasm</location>
    </subcellularLocation>
    <text evidence="1">The phosphorylated form appears to accumulate almost exclusively in the nucleus, whereas the non-phosphorylated form is found in both nucleus and cytoplasm.</text>
</comment>
<comment type="domain">
    <text evidence="1">The zinc finger and the transactivation region are involved in PTGS suppression.</text>
</comment>
<comment type="PTM">
    <text evidence="1">Phosphorylated.</text>
</comment>
<comment type="similarity">
    <text evidence="3">Belongs to the geminiviridae transcriptional activator protein family.</text>
</comment>
<comment type="sequence caution" evidence="3">
    <conflict type="erroneous initiation">
        <sequence resource="EMBL-CDS" id="AAC32413"/>
    </conflict>
</comment>
<feature type="chain" id="PRO_0000222229" description="Transcriptional activator protein">
    <location>
        <begin position="1"/>
        <end position="131"/>
    </location>
</feature>
<feature type="zinc finger region" evidence="1">
    <location>
        <begin position="33"/>
        <end position="52"/>
    </location>
</feature>
<feature type="region of interest" description="Disordered" evidence="2">
    <location>
        <begin position="78"/>
        <end position="131"/>
    </location>
</feature>
<feature type="region of interest" description="Transactivation" evidence="1">
    <location>
        <begin position="117"/>
        <end position="131"/>
    </location>
</feature>
<feature type="short sequence motif" description="Nuclear localization signal" evidence="1">
    <location>
        <begin position="13"/>
        <end position="28"/>
    </location>
</feature>
<sequence length="131" mass="14584">MPNSSSSKVPSIKAQHRIAKKRAVRRRRIDLDCGCSIYIHINCAKDGNGFTHMGRHHCASGREFRFYLGGSKSPLFQDVQXGGSTLHAHKDIPHTNPVQPQPEESTKSSQSVPELPSLDGIDSSFWDDIFE</sequence>
<keyword id="KW-0010">Activator</keyword>
<keyword id="KW-0238">DNA-binding</keyword>
<keyword id="KW-1035">Host cytoplasm</keyword>
<keyword id="KW-1048">Host nucleus</keyword>
<keyword id="KW-0945">Host-virus interaction</keyword>
<keyword id="KW-1090">Inhibition of host innate immune response by virus</keyword>
<keyword id="KW-0479">Metal-binding</keyword>
<keyword id="KW-0597">Phosphoprotein</keyword>
<keyword id="KW-1185">Reference proteome</keyword>
<keyword id="KW-0941">Suppressor of RNA silencing</keyword>
<keyword id="KW-0899">Viral immunoevasion</keyword>
<keyword id="KW-0862">Zinc</keyword>
<keyword id="KW-0863">Zinc-finger</keyword>
<evidence type="ECO:0000250" key="1"/>
<evidence type="ECO:0000256" key="2">
    <source>
        <dbReference type="SAM" id="MobiDB-lite"/>
    </source>
</evidence>
<evidence type="ECO:0000305" key="3"/>
<reference key="1">
    <citation type="journal article" date="1991" name="Virology">
        <title>Infectivity and complete nucleotide sequence of the cloned genomic components of a bipartite squash leaf curl geminivirus with a broad host range phenotype.</title>
        <authorList>
            <person name="Lazarowitz S.G."/>
            <person name="Lazdins I.B."/>
        </authorList>
    </citation>
    <scope>NUCLEOTIDE SEQUENCE [GENOMIC DNA]</scope>
</reference>
<dbReference type="EMBL" id="M38183">
    <property type="protein sequence ID" value="AAC32413.1"/>
    <property type="status" value="ALT_INIT"/>
    <property type="molecule type" value="Genomic_DNA"/>
</dbReference>
<dbReference type="PIR" id="F36785">
    <property type="entry name" value="QQCVS4"/>
</dbReference>
<dbReference type="RefSeq" id="NP_047246.1">
    <property type="nucleotide sequence ID" value="NC_001936.1"/>
</dbReference>
<dbReference type="KEGG" id="vg:956397"/>
<dbReference type="OrthoDB" id="11041at10239"/>
<dbReference type="Proteomes" id="UP000009151">
    <property type="component" value="Genome"/>
</dbReference>
<dbReference type="GO" id="GO:0030430">
    <property type="term" value="C:host cell cytoplasm"/>
    <property type="evidence" value="ECO:0007669"/>
    <property type="project" value="UniProtKB-SubCell"/>
</dbReference>
<dbReference type="GO" id="GO:0042025">
    <property type="term" value="C:host cell nucleus"/>
    <property type="evidence" value="ECO:0007669"/>
    <property type="project" value="UniProtKB-SubCell"/>
</dbReference>
<dbReference type="GO" id="GO:0019028">
    <property type="term" value="C:viral capsid"/>
    <property type="evidence" value="ECO:0007669"/>
    <property type="project" value="InterPro"/>
</dbReference>
<dbReference type="GO" id="GO:0003677">
    <property type="term" value="F:DNA binding"/>
    <property type="evidence" value="ECO:0007669"/>
    <property type="project" value="UniProtKB-KW"/>
</dbReference>
<dbReference type="GO" id="GO:0005198">
    <property type="term" value="F:structural molecule activity"/>
    <property type="evidence" value="ECO:0007669"/>
    <property type="project" value="InterPro"/>
</dbReference>
<dbReference type="GO" id="GO:0008270">
    <property type="term" value="F:zinc ion binding"/>
    <property type="evidence" value="ECO:0007669"/>
    <property type="project" value="UniProtKB-KW"/>
</dbReference>
<dbReference type="GO" id="GO:0052170">
    <property type="term" value="P:symbiont-mediated suppression of host innate immune response"/>
    <property type="evidence" value="ECO:0007669"/>
    <property type="project" value="UniProtKB-KW"/>
</dbReference>
<dbReference type="InterPro" id="IPR000942">
    <property type="entry name" value="Gemini_AL2"/>
</dbReference>
<dbReference type="Pfam" id="PF01440">
    <property type="entry name" value="Gemini_AL2"/>
    <property type="match status" value="1"/>
</dbReference>
<dbReference type="PRINTS" id="PR00230">
    <property type="entry name" value="GEMCOATAL2"/>
</dbReference>
<accession>P27445</accession>
<organism>
    <name type="scientific">Squash leaf curl virus</name>
    <name type="common">SLCV</name>
    <dbReference type="NCBI Taxonomy" id="10829"/>
    <lineage>
        <taxon>Viruses</taxon>
        <taxon>Monodnaviria</taxon>
        <taxon>Shotokuvirae</taxon>
        <taxon>Cressdnaviricota</taxon>
        <taxon>Repensiviricetes</taxon>
        <taxon>Geplafuvirales</taxon>
        <taxon>Geminiviridae</taxon>
        <taxon>Begomovirus</taxon>
    </lineage>
</organism>
<name>TRAP_SLCV</name>